<gene>
    <name evidence="1" type="primary">ligA</name>
    <name type="ordered locus">SBO_2435</name>
</gene>
<comment type="function">
    <text evidence="1">DNA ligase that catalyzes the formation of phosphodiester linkages between 5'-phosphoryl and 3'-hydroxyl groups in double-stranded DNA using NAD as a coenzyme and as the energy source for the reaction. It is essential for DNA replication and repair of damaged DNA.</text>
</comment>
<comment type="catalytic activity">
    <reaction evidence="1">
        <text>NAD(+) + (deoxyribonucleotide)n-3'-hydroxyl + 5'-phospho-(deoxyribonucleotide)m = (deoxyribonucleotide)n+m + AMP + beta-nicotinamide D-nucleotide.</text>
        <dbReference type="EC" id="6.5.1.2"/>
    </reaction>
</comment>
<comment type="cofactor">
    <cofactor evidence="1">
        <name>Mg(2+)</name>
        <dbReference type="ChEBI" id="CHEBI:18420"/>
    </cofactor>
    <cofactor evidence="1">
        <name>Mn(2+)</name>
        <dbReference type="ChEBI" id="CHEBI:29035"/>
    </cofactor>
</comment>
<comment type="similarity">
    <text evidence="1">Belongs to the NAD-dependent DNA ligase family. LigA subfamily.</text>
</comment>
<protein>
    <recommendedName>
        <fullName evidence="1">DNA ligase</fullName>
        <ecNumber evidence="1">6.5.1.2</ecNumber>
    </recommendedName>
    <alternativeName>
        <fullName evidence="1">Polydeoxyribonucleotide synthase [NAD(+)]</fullName>
    </alternativeName>
</protein>
<name>DNLJ_SHIBS</name>
<organism>
    <name type="scientific">Shigella boydii serotype 4 (strain Sb227)</name>
    <dbReference type="NCBI Taxonomy" id="300268"/>
    <lineage>
        <taxon>Bacteria</taxon>
        <taxon>Pseudomonadati</taxon>
        <taxon>Pseudomonadota</taxon>
        <taxon>Gammaproteobacteria</taxon>
        <taxon>Enterobacterales</taxon>
        <taxon>Enterobacteriaceae</taxon>
        <taxon>Shigella</taxon>
    </lineage>
</organism>
<feature type="chain" id="PRO_0000313434" description="DNA ligase">
    <location>
        <begin position="1"/>
        <end position="671"/>
    </location>
</feature>
<feature type="domain" description="BRCT" evidence="1">
    <location>
        <begin position="593"/>
        <end position="671"/>
    </location>
</feature>
<feature type="active site" description="N6-AMP-lysine intermediate" evidence="1">
    <location>
        <position position="115"/>
    </location>
</feature>
<feature type="binding site" evidence="1">
    <location>
        <begin position="32"/>
        <end position="36"/>
    </location>
    <ligand>
        <name>NAD(+)</name>
        <dbReference type="ChEBI" id="CHEBI:57540"/>
    </ligand>
</feature>
<feature type="binding site" evidence="1">
    <location>
        <begin position="81"/>
        <end position="82"/>
    </location>
    <ligand>
        <name>NAD(+)</name>
        <dbReference type="ChEBI" id="CHEBI:57540"/>
    </ligand>
</feature>
<feature type="binding site" evidence="1">
    <location>
        <position position="113"/>
    </location>
    <ligand>
        <name>NAD(+)</name>
        <dbReference type="ChEBI" id="CHEBI:57540"/>
    </ligand>
</feature>
<feature type="binding site" evidence="1">
    <location>
        <position position="136"/>
    </location>
    <ligand>
        <name>NAD(+)</name>
        <dbReference type="ChEBI" id="CHEBI:57540"/>
    </ligand>
</feature>
<feature type="binding site" evidence="1">
    <location>
        <position position="173"/>
    </location>
    <ligand>
        <name>NAD(+)</name>
        <dbReference type="ChEBI" id="CHEBI:57540"/>
    </ligand>
</feature>
<feature type="binding site" evidence="1">
    <location>
        <position position="290"/>
    </location>
    <ligand>
        <name>NAD(+)</name>
        <dbReference type="ChEBI" id="CHEBI:57540"/>
    </ligand>
</feature>
<feature type="binding site" evidence="1">
    <location>
        <position position="314"/>
    </location>
    <ligand>
        <name>NAD(+)</name>
        <dbReference type="ChEBI" id="CHEBI:57540"/>
    </ligand>
</feature>
<feature type="binding site" evidence="1">
    <location>
        <position position="408"/>
    </location>
    <ligand>
        <name>Zn(2+)</name>
        <dbReference type="ChEBI" id="CHEBI:29105"/>
    </ligand>
</feature>
<feature type="binding site" evidence="1">
    <location>
        <position position="411"/>
    </location>
    <ligand>
        <name>Zn(2+)</name>
        <dbReference type="ChEBI" id="CHEBI:29105"/>
    </ligand>
</feature>
<feature type="binding site" evidence="1">
    <location>
        <position position="426"/>
    </location>
    <ligand>
        <name>Zn(2+)</name>
        <dbReference type="ChEBI" id="CHEBI:29105"/>
    </ligand>
</feature>
<feature type="binding site" evidence="1">
    <location>
        <position position="432"/>
    </location>
    <ligand>
        <name>Zn(2+)</name>
        <dbReference type="ChEBI" id="CHEBI:29105"/>
    </ligand>
</feature>
<evidence type="ECO:0000255" key="1">
    <source>
        <dbReference type="HAMAP-Rule" id="MF_01588"/>
    </source>
</evidence>
<proteinExistence type="inferred from homology"/>
<sequence length="671" mass="73623">MESIEQQLTELRTTLRHHEYLYHVMDAPEIPDAEYDRLMRELCELETKHPELITPDSPTQRVGAAPLAAFSQIRHEVPMLSLDNVFDEESFLAFNKRVQDRLKNNEKVTWCCELKLDGLAVSILYENGVLVSAATRGDGTTGEDITSNVRTIRAIPLKLHGENIPARLEVRGEVFLPQAGFEKINEDARRTGGKVFANPRNAAAGSLRQLDPRITAKRPLTFFCYGVGVLEGGELPDTHLGRLLQFKKWGVPVSDRVTLCESAEEVLAFYHKVEEDRPTLGFDIDGVVIKVNSLEQQEQLGFVARAPRWAVAFKFPAQEQMTFVRDVEFQVGRTGAITPVARLEPVHVAGVLVSNATLHNADEIERLGLRIGDKVVIRRAGDVIPQVVNVVLSERPEDTREVVFPTHCPVCGSDVERVEGEAVARCTGGLICGAQRKESLKHFVSRRAMDVDGMGDKIIDQLVEKEYVHTPADLFKLTAGKLTGLERMGPKLAQNVVNALEKAKETTFARFLYALGIREVGEATAAGLAAYFGTLEALEAASIEELQKVPDVGIVVASHVHNFFAEESNRNVISELLAEGVHWPAPIVINAEEIDSPFAGKTVVLTGSLSQMSRDDAKARLVELGAKVAGSVSKKTDLVIAGEAAGSKLAKAQELGIEVIDEAEMLRLLGS</sequence>
<dbReference type="EC" id="6.5.1.2" evidence="1"/>
<dbReference type="EMBL" id="CP000036">
    <property type="protein sequence ID" value="ABB66990.1"/>
    <property type="molecule type" value="Genomic_DNA"/>
</dbReference>
<dbReference type="RefSeq" id="WP_000443654.1">
    <property type="nucleotide sequence ID" value="NC_007613.1"/>
</dbReference>
<dbReference type="SMR" id="Q31Y68"/>
<dbReference type="KEGG" id="sbo:SBO_2435"/>
<dbReference type="HOGENOM" id="CLU_007764_2_1_6"/>
<dbReference type="Proteomes" id="UP000007067">
    <property type="component" value="Chromosome"/>
</dbReference>
<dbReference type="GO" id="GO:0005829">
    <property type="term" value="C:cytosol"/>
    <property type="evidence" value="ECO:0007669"/>
    <property type="project" value="TreeGrafter"/>
</dbReference>
<dbReference type="GO" id="GO:0003677">
    <property type="term" value="F:DNA binding"/>
    <property type="evidence" value="ECO:0007669"/>
    <property type="project" value="InterPro"/>
</dbReference>
<dbReference type="GO" id="GO:0003911">
    <property type="term" value="F:DNA ligase (NAD+) activity"/>
    <property type="evidence" value="ECO:0007669"/>
    <property type="project" value="UniProtKB-UniRule"/>
</dbReference>
<dbReference type="GO" id="GO:0046872">
    <property type="term" value="F:metal ion binding"/>
    <property type="evidence" value="ECO:0007669"/>
    <property type="project" value="UniProtKB-KW"/>
</dbReference>
<dbReference type="GO" id="GO:0006281">
    <property type="term" value="P:DNA repair"/>
    <property type="evidence" value="ECO:0007669"/>
    <property type="project" value="UniProtKB-KW"/>
</dbReference>
<dbReference type="GO" id="GO:0006260">
    <property type="term" value="P:DNA replication"/>
    <property type="evidence" value="ECO:0007669"/>
    <property type="project" value="UniProtKB-KW"/>
</dbReference>
<dbReference type="CDD" id="cd17748">
    <property type="entry name" value="BRCT_DNA_ligase_like"/>
    <property type="match status" value="1"/>
</dbReference>
<dbReference type="CDD" id="cd00114">
    <property type="entry name" value="LIGANc"/>
    <property type="match status" value="1"/>
</dbReference>
<dbReference type="FunFam" id="1.10.150.20:FF:000006">
    <property type="entry name" value="DNA ligase"/>
    <property type="match status" value="1"/>
</dbReference>
<dbReference type="FunFam" id="1.10.150.20:FF:000007">
    <property type="entry name" value="DNA ligase"/>
    <property type="match status" value="1"/>
</dbReference>
<dbReference type="FunFam" id="1.10.287.610:FF:000002">
    <property type="entry name" value="DNA ligase"/>
    <property type="match status" value="1"/>
</dbReference>
<dbReference type="FunFam" id="2.40.50.140:FF:000012">
    <property type="entry name" value="DNA ligase"/>
    <property type="match status" value="1"/>
</dbReference>
<dbReference type="FunFam" id="3.30.470.30:FF:000001">
    <property type="entry name" value="DNA ligase"/>
    <property type="match status" value="1"/>
</dbReference>
<dbReference type="FunFam" id="3.40.50.10190:FF:000004">
    <property type="entry name" value="DNA ligase"/>
    <property type="match status" value="1"/>
</dbReference>
<dbReference type="FunFam" id="6.20.10.30:FF:000001">
    <property type="entry name" value="DNA ligase"/>
    <property type="match status" value="1"/>
</dbReference>
<dbReference type="Gene3D" id="6.20.10.30">
    <property type="match status" value="1"/>
</dbReference>
<dbReference type="Gene3D" id="1.10.150.20">
    <property type="entry name" value="5' to 3' exonuclease, C-terminal subdomain"/>
    <property type="match status" value="2"/>
</dbReference>
<dbReference type="Gene3D" id="3.40.50.10190">
    <property type="entry name" value="BRCT domain"/>
    <property type="match status" value="1"/>
</dbReference>
<dbReference type="Gene3D" id="3.30.470.30">
    <property type="entry name" value="DNA ligase/mRNA capping enzyme"/>
    <property type="match status" value="1"/>
</dbReference>
<dbReference type="Gene3D" id="1.10.287.610">
    <property type="entry name" value="Helix hairpin bin"/>
    <property type="match status" value="1"/>
</dbReference>
<dbReference type="Gene3D" id="2.40.50.140">
    <property type="entry name" value="Nucleic acid-binding proteins"/>
    <property type="match status" value="1"/>
</dbReference>
<dbReference type="HAMAP" id="MF_01588">
    <property type="entry name" value="DNA_ligase_A"/>
    <property type="match status" value="1"/>
</dbReference>
<dbReference type="InterPro" id="IPR001357">
    <property type="entry name" value="BRCT_dom"/>
</dbReference>
<dbReference type="InterPro" id="IPR036420">
    <property type="entry name" value="BRCT_dom_sf"/>
</dbReference>
<dbReference type="InterPro" id="IPR041663">
    <property type="entry name" value="DisA/LigA_HHH"/>
</dbReference>
<dbReference type="InterPro" id="IPR001679">
    <property type="entry name" value="DNA_ligase"/>
</dbReference>
<dbReference type="InterPro" id="IPR018239">
    <property type="entry name" value="DNA_ligase_AS"/>
</dbReference>
<dbReference type="InterPro" id="IPR033136">
    <property type="entry name" value="DNA_ligase_CS"/>
</dbReference>
<dbReference type="InterPro" id="IPR013839">
    <property type="entry name" value="DNAligase_adenylation"/>
</dbReference>
<dbReference type="InterPro" id="IPR013840">
    <property type="entry name" value="DNAligase_N"/>
</dbReference>
<dbReference type="InterPro" id="IPR003583">
    <property type="entry name" value="Hlx-hairpin-Hlx_DNA-bd_motif"/>
</dbReference>
<dbReference type="InterPro" id="IPR012340">
    <property type="entry name" value="NA-bd_OB-fold"/>
</dbReference>
<dbReference type="InterPro" id="IPR004150">
    <property type="entry name" value="NAD_DNA_ligase_OB"/>
</dbReference>
<dbReference type="InterPro" id="IPR010994">
    <property type="entry name" value="RuvA_2-like"/>
</dbReference>
<dbReference type="InterPro" id="IPR004149">
    <property type="entry name" value="Znf_DNAligase_C4"/>
</dbReference>
<dbReference type="NCBIfam" id="TIGR00575">
    <property type="entry name" value="dnlj"/>
    <property type="match status" value="1"/>
</dbReference>
<dbReference type="NCBIfam" id="NF005932">
    <property type="entry name" value="PRK07956.1"/>
    <property type="match status" value="1"/>
</dbReference>
<dbReference type="PANTHER" id="PTHR23389">
    <property type="entry name" value="CHROMOSOME TRANSMISSION FIDELITY FACTOR 18"/>
    <property type="match status" value="1"/>
</dbReference>
<dbReference type="PANTHER" id="PTHR23389:SF9">
    <property type="entry name" value="DNA LIGASE"/>
    <property type="match status" value="1"/>
</dbReference>
<dbReference type="Pfam" id="PF00533">
    <property type="entry name" value="BRCT"/>
    <property type="match status" value="1"/>
</dbReference>
<dbReference type="Pfam" id="PF01653">
    <property type="entry name" value="DNA_ligase_aden"/>
    <property type="match status" value="1"/>
</dbReference>
<dbReference type="Pfam" id="PF03120">
    <property type="entry name" value="DNA_ligase_OB"/>
    <property type="match status" value="1"/>
</dbReference>
<dbReference type="Pfam" id="PF03119">
    <property type="entry name" value="DNA_ligase_ZBD"/>
    <property type="match status" value="1"/>
</dbReference>
<dbReference type="Pfam" id="PF12826">
    <property type="entry name" value="HHH_2"/>
    <property type="match status" value="1"/>
</dbReference>
<dbReference type="Pfam" id="PF14520">
    <property type="entry name" value="HHH_5"/>
    <property type="match status" value="1"/>
</dbReference>
<dbReference type="Pfam" id="PF22745">
    <property type="entry name" value="Nlig-Ia"/>
    <property type="match status" value="1"/>
</dbReference>
<dbReference type="PIRSF" id="PIRSF001604">
    <property type="entry name" value="LigA"/>
    <property type="match status" value="1"/>
</dbReference>
<dbReference type="SMART" id="SM00292">
    <property type="entry name" value="BRCT"/>
    <property type="match status" value="1"/>
</dbReference>
<dbReference type="SMART" id="SM00278">
    <property type="entry name" value="HhH1"/>
    <property type="match status" value="4"/>
</dbReference>
<dbReference type="SMART" id="SM00532">
    <property type="entry name" value="LIGANc"/>
    <property type="match status" value="1"/>
</dbReference>
<dbReference type="SUPFAM" id="SSF52113">
    <property type="entry name" value="BRCT domain"/>
    <property type="match status" value="1"/>
</dbReference>
<dbReference type="SUPFAM" id="SSF56091">
    <property type="entry name" value="DNA ligase/mRNA capping enzyme, catalytic domain"/>
    <property type="match status" value="1"/>
</dbReference>
<dbReference type="SUPFAM" id="SSF50249">
    <property type="entry name" value="Nucleic acid-binding proteins"/>
    <property type="match status" value="1"/>
</dbReference>
<dbReference type="SUPFAM" id="SSF47781">
    <property type="entry name" value="RuvA domain 2-like"/>
    <property type="match status" value="1"/>
</dbReference>
<dbReference type="PROSITE" id="PS50172">
    <property type="entry name" value="BRCT"/>
    <property type="match status" value="1"/>
</dbReference>
<dbReference type="PROSITE" id="PS01055">
    <property type="entry name" value="DNA_LIGASE_N1"/>
    <property type="match status" value="1"/>
</dbReference>
<dbReference type="PROSITE" id="PS01056">
    <property type="entry name" value="DNA_LIGASE_N2"/>
    <property type="match status" value="1"/>
</dbReference>
<reference key="1">
    <citation type="journal article" date="2005" name="Nucleic Acids Res.">
        <title>Genome dynamics and diversity of Shigella species, the etiologic agents of bacillary dysentery.</title>
        <authorList>
            <person name="Yang F."/>
            <person name="Yang J."/>
            <person name="Zhang X."/>
            <person name="Chen L."/>
            <person name="Jiang Y."/>
            <person name="Yan Y."/>
            <person name="Tang X."/>
            <person name="Wang J."/>
            <person name="Xiong Z."/>
            <person name="Dong J."/>
            <person name="Xue Y."/>
            <person name="Zhu Y."/>
            <person name="Xu X."/>
            <person name="Sun L."/>
            <person name="Chen S."/>
            <person name="Nie H."/>
            <person name="Peng J."/>
            <person name="Xu J."/>
            <person name="Wang Y."/>
            <person name="Yuan Z."/>
            <person name="Wen Y."/>
            <person name="Yao Z."/>
            <person name="Shen Y."/>
            <person name="Qiang B."/>
            <person name="Hou Y."/>
            <person name="Yu J."/>
            <person name="Jin Q."/>
        </authorList>
    </citation>
    <scope>NUCLEOTIDE SEQUENCE [LARGE SCALE GENOMIC DNA]</scope>
    <source>
        <strain>Sb227</strain>
    </source>
</reference>
<keyword id="KW-0227">DNA damage</keyword>
<keyword id="KW-0234">DNA repair</keyword>
<keyword id="KW-0235">DNA replication</keyword>
<keyword id="KW-0436">Ligase</keyword>
<keyword id="KW-0460">Magnesium</keyword>
<keyword id="KW-0464">Manganese</keyword>
<keyword id="KW-0479">Metal-binding</keyword>
<keyword id="KW-0520">NAD</keyword>
<keyword id="KW-0862">Zinc</keyword>
<accession>Q31Y68</accession>